<proteinExistence type="inferred from homology"/>
<comment type="function">
    <text evidence="1">Part of the ABC transporter complex PstSACB involved in phosphate import.</text>
</comment>
<comment type="subunit">
    <text evidence="4">The complex is composed of two ATP-binding proteins (PstB), two transmembrane proteins (PstC and PstA) and a solute-binding protein (PstS).</text>
</comment>
<comment type="subcellular location">
    <subcellularLocation>
        <location evidence="1">Periplasm</location>
    </subcellularLocation>
</comment>
<comment type="similarity">
    <text evidence="4">Belongs to the PstS family.</text>
</comment>
<comment type="sequence caution" evidence="4">
    <conflict type="frameshift">
        <sequence resource="EMBL-CDS" id="AAC23028"/>
    </conflict>
</comment>
<keyword id="KW-0574">Periplasm</keyword>
<keyword id="KW-0592">Phosphate transport</keyword>
<keyword id="KW-1185">Reference proteome</keyword>
<keyword id="KW-0732">Signal</keyword>
<keyword id="KW-0813">Transport</keyword>
<sequence length="334" mass="36665">MKKKSYYVLTLGTLPFAQANSITGAGASFPYPIYAKWASLYEKETGNKVNYQSIGSGGGQQQIIAKTVDFGASDDPMKSELLQQHQLVQFPAVIGGIVPVVNLPEIKPGKLKLSGKLLAEIFLGKIKKWNDPDLVALNPTLPLPNKNIIVIHRSDGSGTTFGFTNYLSKISNDWKNQVGEGKSVKWLTGQGGKGNEGVASYVRQMKYSIGYVEYAYAKQNQLAWISLQNQAGQFVQPSNESFMAAASHAKWHEKAGMGVILTNETGEKSWPITAASFILLNKYSDNPETTKNVLAFFDWAFSRGQDAATELDYVPIPADVVSTIKSQWKTELKQ</sequence>
<organism>
    <name type="scientific">Haemophilus influenzae (strain ATCC 51907 / DSM 11121 / KW20 / Rd)</name>
    <dbReference type="NCBI Taxonomy" id="71421"/>
    <lineage>
        <taxon>Bacteria</taxon>
        <taxon>Pseudomonadati</taxon>
        <taxon>Pseudomonadota</taxon>
        <taxon>Gammaproteobacteria</taxon>
        <taxon>Pasteurellales</taxon>
        <taxon>Pasteurellaceae</taxon>
        <taxon>Haemophilus</taxon>
    </lineage>
</organism>
<dbReference type="EMBL" id="L42023">
    <property type="protein sequence ID" value="AAC23028.1"/>
    <property type="status" value="ALT_FRAME"/>
    <property type="molecule type" value="Genomic_DNA"/>
</dbReference>
<dbReference type="PIR" id="I64120">
    <property type="entry name" value="I64120"/>
</dbReference>
<dbReference type="RefSeq" id="NP_439535.1">
    <property type="nucleotide sequence ID" value="NC_000907.1"/>
</dbReference>
<dbReference type="SMR" id="P45192"/>
<dbReference type="STRING" id="71421.HI_1383"/>
<dbReference type="EnsemblBacteria" id="AAC23028">
    <property type="protein sequence ID" value="AAC23028"/>
    <property type="gene ID" value="HI_1383"/>
</dbReference>
<dbReference type="KEGG" id="hin:HI_1383"/>
<dbReference type="PATRIC" id="fig|71421.8.peg.1439"/>
<dbReference type="eggNOG" id="COG0226">
    <property type="taxonomic scope" value="Bacteria"/>
</dbReference>
<dbReference type="HOGENOM" id="CLU_034528_1_0_6"/>
<dbReference type="OrthoDB" id="9801510at2"/>
<dbReference type="PhylomeDB" id="P45192"/>
<dbReference type="BioCyc" id="HINF71421:G1GJ1-1409-MONOMER"/>
<dbReference type="Proteomes" id="UP000000579">
    <property type="component" value="Chromosome"/>
</dbReference>
<dbReference type="GO" id="GO:0043190">
    <property type="term" value="C:ATP-binding cassette (ABC) transporter complex"/>
    <property type="evidence" value="ECO:0007669"/>
    <property type="project" value="InterPro"/>
</dbReference>
<dbReference type="GO" id="GO:0042597">
    <property type="term" value="C:periplasmic space"/>
    <property type="evidence" value="ECO:0007669"/>
    <property type="project" value="UniProtKB-SubCell"/>
</dbReference>
<dbReference type="GO" id="GO:0042301">
    <property type="term" value="F:phosphate ion binding"/>
    <property type="evidence" value="ECO:0007669"/>
    <property type="project" value="InterPro"/>
</dbReference>
<dbReference type="GO" id="GO:0035435">
    <property type="term" value="P:phosphate ion transmembrane transport"/>
    <property type="evidence" value="ECO:0007669"/>
    <property type="project" value="InterPro"/>
</dbReference>
<dbReference type="CDD" id="cd13565">
    <property type="entry name" value="PBP2_PstS"/>
    <property type="match status" value="1"/>
</dbReference>
<dbReference type="Gene3D" id="3.40.190.10">
    <property type="entry name" value="Periplasmic binding protein-like II"/>
    <property type="match status" value="2"/>
</dbReference>
<dbReference type="InterPro" id="IPR005673">
    <property type="entry name" value="ABC_phos-bd_PstS"/>
</dbReference>
<dbReference type="InterPro" id="IPR024370">
    <property type="entry name" value="PBP_domain"/>
</dbReference>
<dbReference type="InterPro" id="IPR050962">
    <property type="entry name" value="Phosphate-bind_PstS"/>
</dbReference>
<dbReference type="NCBIfam" id="TIGR00975">
    <property type="entry name" value="3a0107s03"/>
    <property type="match status" value="1"/>
</dbReference>
<dbReference type="NCBIfam" id="NF008171">
    <property type="entry name" value="PRK10918.1"/>
    <property type="match status" value="1"/>
</dbReference>
<dbReference type="PANTHER" id="PTHR42996">
    <property type="entry name" value="PHOSPHATE-BINDING PROTEIN PSTS"/>
    <property type="match status" value="1"/>
</dbReference>
<dbReference type="PANTHER" id="PTHR42996:SF1">
    <property type="entry name" value="PHOSPHATE-BINDING PROTEIN PSTS"/>
    <property type="match status" value="1"/>
</dbReference>
<dbReference type="Pfam" id="PF12849">
    <property type="entry name" value="PBP_like_2"/>
    <property type="match status" value="1"/>
</dbReference>
<dbReference type="PIRSF" id="PIRSF002756">
    <property type="entry name" value="PstS"/>
    <property type="match status" value="1"/>
</dbReference>
<dbReference type="SUPFAM" id="SSF53850">
    <property type="entry name" value="Periplasmic binding protein-like II"/>
    <property type="match status" value="1"/>
</dbReference>
<accession>P45192</accession>
<reference key="1">
    <citation type="journal article" date="1995" name="Science">
        <title>Whole-genome random sequencing and assembly of Haemophilus influenzae Rd.</title>
        <authorList>
            <person name="Fleischmann R.D."/>
            <person name="Adams M.D."/>
            <person name="White O."/>
            <person name="Clayton R.A."/>
            <person name="Kirkness E.F."/>
            <person name="Kerlavage A.R."/>
            <person name="Bult C.J."/>
            <person name="Tomb J.-F."/>
            <person name="Dougherty B.A."/>
            <person name="Merrick J.M."/>
            <person name="McKenney K."/>
            <person name="Sutton G.G."/>
            <person name="FitzHugh W."/>
            <person name="Fields C.A."/>
            <person name="Gocayne J.D."/>
            <person name="Scott J.D."/>
            <person name="Shirley R."/>
            <person name="Liu L.-I."/>
            <person name="Glodek A."/>
            <person name="Kelley J.M."/>
            <person name="Weidman J.F."/>
            <person name="Phillips C.A."/>
            <person name="Spriggs T."/>
            <person name="Hedblom E."/>
            <person name="Cotton M.D."/>
            <person name="Utterback T.R."/>
            <person name="Hanna M.C."/>
            <person name="Nguyen D.T."/>
            <person name="Saudek D.M."/>
            <person name="Brandon R.C."/>
            <person name="Fine L.D."/>
            <person name="Fritchman J.L."/>
            <person name="Fuhrmann J.L."/>
            <person name="Geoghagen N.S.M."/>
            <person name="Gnehm C.L."/>
            <person name="McDonald L.A."/>
            <person name="Small K.V."/>
            <person name="Fraser C.M."/>
            <person name="Smith H.O."/>
            <person name="Venter J.C."/>
        </authorList>
    </citation>
    <scope>NUCLEOTIDE SEQUENCE [LARGE SCALE GENOMIC DNA]</scope>
    <source>
        <strain>ATCC 51907 / DSM 11121 / KW20 / Rd</strain>
    </source>
</reference>
<gene>
    <name type="primary">pstS</name>
    <name type="ordered locus">HI_1383</name>
</gene>
<evidence type="ECO:0000250" key="1"/>
<evidence type="ECO:0000250" key="2">
    <source>
        <dbReference type="UniProtKB" id="P9WGT7"/>
    </source>
</evidence>
<evidence type="ECO:0000255" key="3"/>
<evidence type="ECO:0000305" key="4"/>
<protein>
    <recommendedName>
        <fullName>Phosphate-binding protein PstS</fullName>
        <shortName>PBP</shortName>
    </recommendedName>
</protein>
<feature type="signal peptide" evidence="3">
    <location>
        <begin position="1"/>
        <end position="19"/>
    </location>
</feature>
<feature type="chain" id="PRO_0000031849" description="Phosphate-binding protein PstS">
    <location>
        <begin position="20"/>
        <end position="334"/>
    </location>
</feature>
<feature type="binding site" evidence="2">
    <location>
        <begin position="27"/>
        <end position="29"/>
    </location>
    <ligand>
        <name>phosphate</name>
        <dbReference type="ChEBI" id="CHEBI:43474"/>
    </ligand>
</feature>
<feature type="binding site" evidence="2">
    <location>
        <position position="56"/>
    </location>
    <ligand>
        <name>phosphate</name>
        <dbReference type="ChEBI" id="CHEBI:43474"/>
    </ligand>
</feature>
<feature type="binding site" evidence="2">
    <location>
        <position position="74"/>
    </location>
    <ligand>
        <name>phosphate</name>
        <dbReference type="ChEBI" id="CHEBI:43474"/>
    </ligand>
</feature>
<feature type="binding site" evidence="2">
    <location>
        <begin position="157"/>
        <end position="159"/>
    </location>
    <ligand>
        <name>phosphate</name>
        <dbReference type="ChEBI" id="CHEBI:43474"/>
    </ligand>
</feature>
<name>PSTS_HAEIN</name>